<proteinExistence type="evidence at protein level"/>
<name>AP5S1_HUMAN</name>
<keyword id="KW-0963">Cytoplasm</keyword>
<keyword id="KW-0227">DNA damage</keyword>
<keyword id="KW-0234">DNA repair</keyword>
<keyword id="KW-0967">Endosome</keyword>
<keyword id="KW-0458">Lysosome</keyword>
<keyword id="KW-0472">Membrane</keyword>
<keyword id="KW-0653">Protein transport</keyword>
<keyword id="KW-1267">Proteomics identification</keyword>
<keyword id="KW-1185">Reference proteome</keyword>
<keyword id="KW-0813">Transport</keyword>
<gene>
    <name type="primary">AP5S1</name>
    <name type="synonym">C20orf29</name>
</gene>
<dbReference type="EMBL" id="AK002030">
    <property type="protein sequence ID" value="BAA92045.1"/>
    <property type="molecule type" value="mRNA"/>
</dbReference>
<dbReference type="EMBL" id="AK093332">
    <property type="protein sequence ID" value="BAG52692.1"/>
    <property type="molecule type" value="mRNA"/>
</dbReference>
<dbReference type="EMBL" id="AL109804">
    <property type="status" value="NOT_ANNOTATED_CDS"/>
    <property type="molecule type" value="Genomic_DNA"/>
</dbReference>
<dbReference type="EMBL" id="CH471133">
    <property type="protein sequence ID" value="EAX10483.1"/>
    <property type="molecule type" value="Genomic_DNA"/>
</dbReference>
<dbReference type="EMBL" id="CH471133">
    <property type="protein sequence ID" value="EAX10484.1"/>
    <property type="molecule type" value="Genomic_DNA"/>
</dbReference>
<dbReference type="EMBL" id="CH471133">
    <property type="protein sequence ID" value="EAX10485.1"/>
    <property type="molecule type" value="Genomic_DNA"/>
</dbReference>
<dbReference type="EMBL" id="CH471133">
    <property type="protein sequence ID" value="EAX10486.1"/>
    <property type="molecule type" value="Genomic_DNA"/>
</dbReference>
<dbReference type="EMBL" id="BC043344">
    <property type="protein sequence ID" value="AAH43344.1"/>
    <property type="molecule type" value="mRNA"/>
</dbReference>
<dbReference type="CCDS" id="CCDS13070.1"/>
<dbReference type="RefSeq" id="NP_001191375.1">
    <property type="nucleotide sequence ID" value="NM_001204446.2"/>
</dbReference>
<dbReference type="RefSeq" id="NP_001191376.1">
    <property type="nucleotide sequence ID" value="NM_001204447.2"/>
</dbReference>
<dbReference type="RefSeq" id="NP_060817.1">
    <property type="nucleotide sequence ID" value="NM_018347.3"/>
</dbReference>
<dbReference type="BioGRID" id="120599">
    <property type="interactions" value="22"/>
</dbReference>
<dbReference type="ComplexPortal" id="CPX-5181">
    <property type="entry name" value="AP-5 Adaptor complex"/>
</dbReference>
<dbReference type="CORUM" id="Q9NUS5"/>
<dbReference type="DIP" id="DIP-60182N"/>
<dbReference type="FunCoup" id="Q9NUS5">
    <property type="interactions" value="1304"/>
</dbReference>
<dbReference type="IntAct" id="Q9NUS5">
    <property type="interactions" value="17"/>
</dbReference>
<dbReference type="STRING" id="9606.ENSP00000481750"/>
<dbReference type="iPTMnet" id="Q9NUS5"/>
<dbReference type="PhosphoSitePlus" id="Q9NUS5"/>
<dbReference type="BioMuta" id="AP5S1"/>
<dbReference type="DMDM" id="23396535"/>
<dbReference type="jPOST" id="Q9NUS5"/>
<dbReference type="MassIVE" id="Q9NUS5"/>
<dbReference type="PaxDb" id="9606-ENSP00000481750"/>
<dbReference type="PeptideAtlas" id="Q9NUS5"/>
<dbReference type="ProteomicsDB" id="82717"/>
<dbReference type="Pumba" id="Q9NUS5"/>
<dbReference type="Antibodypedia" id="64737">
    <property type="antibodies" value="12 antibodies from 8 providers"/>
</dbReference>
<dbReference type="DNASU" id="55317"/>
<dbReference type="Ensembl" id="ENST00000379567.6">
    <property type="protein sequence ID" value="ENSP00000368886.2"/>
    <property type="gene ID" value="ENSG00000125843.12"/>
</dbReference>
<dbReference type="Ensembl" id="ENST00000455742.6">
    <property type="protein sequence ID" value="ENSP00000405487.2"/>
    <property type="gene ID" value="ENSG00000125843.12"/>
</dbReference>
<dbReference type="Ensembl" id="ENST00000615891.2">
    <property type="protein sequence ID" value="ENSP00000481750.1"/>
    <property type="gene ID" value="ENSG00000125843.12"/>
</dbReference>
<dbReference type="Ensembl" id="ENST00000620777.2">
    <property type="protein sequence ID" value="ENSP00000520567.1"/>
    <property type="gene ID" value="ENSG00000125843.12"/>
</dbReference>
<dbReference type="GeneID" id="55317"/>
<dbReference type="KEGG" id="hsa:55317"/>
<dbReference type="MANE-Select" id="ENST00000615891.2">
    <property type="protein sequence ID" value="ENSP00000481750.1"/>
    <property type="RefSeq nucleotide sequence ID" value="NM_018347.3"/>
    <property type="RefSeq protein sequence ID" value="NP_060817.1"/>
</dbReference>
<dbReference type="UCSC" id="uc002wjs.3">
    <property type="organism name" value="human"/>
</dbReference>
<dbReference type="AGR" id="HGNC:15875"/>
<dbReference type="CTD" id="55317"/>
<dbReference type="GeneCards" id="AP5S1"/>
<dbReference type="HGNC" id="HGNC:15875">
    <property type="gene designation" value="AP5S1"/>
</dbReference>
<dbReference type="HPA" id="ENSG00000125843">
    <property type="expression patterns" value="Low tissue specificity"/>
</dbReference>
<dbReference type="MIM" id="614824">
    <property type="type" value="gene"/>
</dbReference>
<dbReference type="neXtProt" id="NX_Q9NUS5"/>
<dbReference type="OpenTargets" id="ENSG00000125843"/>
<dbReference type="PharmGKB" id="PA25744"/>
<dbReference type="VEuPathDB" id="HostDB:ENSG00000125843"/>
<dbReference type="eggNOG" id="ENOG502RZ3F">
    <property type="taxonomic scope" value="Eukaryota"/>
</dbReference>
<dbReference type="GeneTree" id="ENSGT00390000013178"/>
<dbReference type="HOGENOM" id="CLU_114672_1_0_1"/>
<dbReference type="InParanoid" id="Q9NUS5"/>
<dbReference type="OMA" id="RADCIEG"/>
<dbReference type="OrthoDB" id="370698at2759"/>
<dbReference type="PAN-GO" id="Q9NUS5">
    <property type="GO annotations" value="5 GO annotations based on evolutionary models"/>
</dbReference>
<dbReference type="PhylomeDB" id="Q9NUS5"/>
<dbReference type="TreeFam" id="TF332332"/>
<dbReference type="PathwayCommons" id="Q9NUS5"/>
<dbReference type="SignaLink" id="Q9NUS5"/>
<dbReference type="BioGRID-ORCS" id="55317">
    <property type="hits" value="10 hits in 1160 CRISPR screens"/>
</dbReference>
<dbReference type="GenomeRNAi" id="55317"/>
<dbReference type="Pharos" id="Q9NUS5">
    <property type="development level" value="Tdark"/>
</dbReference>
<dbReference type="PRO" id="PR:Q9NUS5"/>
<dbReference type="Proteomes" id="UP000005640">
    <property type="component" value="Chromosome 20"/>
</dbReference>
<dbReference type="RNAct" id="Q9NUS5">
    <property type="molecule type" value="protein"/>
</dbReference>
<dbReference type="Bgee" id="ENSG00000125843">
    <property type="expression patterns" value="Expressed in primordial germ cell in gonad and 152 other cell types or tissues"/>
</dbReference>
<dbReference type="ExpressionAtlas" id="Q9NUS5">
    <property type="expression patterns" value="baseline and differential"/>
</dbReference>
<dbReference type="GO" id="GO:0044599">
    <property type="term" value="C:AP-5 adaptor complex"/>
    <property type="evidence" value="ECO:0000303"/>
    <property type="project" value="ComplexPortal"/>
</dbReference>
<dbReference type="GO" id="GO:0030119">
    <property type="term" value="C:AP-type membrane coat adaptor complex"/>
    <property type="evidence" value="ECO:0000314"/>
    <property type="project" value="UniProtKB"/>
</dbReference>
<dbReference type="GO" id="GO:0005829">
    <property type="term" value="C:cytosol"/>
    <property type="evidence" value="ECO:0000314"/>
    <property type="project" value="HPA"/>
</dbReference>
<dbReference type="GO" id="GO:0005770">
    <property type="term" value="C:late endosome"/>
    <property type="evidence" value="ECO:0000314"/>
    <property type="project" value="UniProtKB"/>
</dbReference>
<dbReference type="GO" id="GO:0031902">
    <property type="term" value="C:late endosome membrane"/>
    <property type="evidence" value="ECO:0007669"/>
    <property type="project" value="UniProtKB-SubCell"/>
</dbReference>
<dbReference type="GO" id="GO:0005765">
    <property type="term" value="C:lysosomal membrane"/>
    <property type="evidence" value="ECO:0007669"/>
    <property type="project" value="UniProtKB-SubCell"/>
</dbReference>
<dbReference type="GO" id="GO:0005764">
    <property type="term" value="C:lysosome"/>
    <property type="evidence" value="ECO:0000314"/>
    <property type="project" value="UniProtKB"/>
</dbReference>
<dbReference type="GO" id="GO:0005654">
    <property type="term" value="C:nucleoplasm"/>
    <property type="evidence" value="ECO:0000314"/>
    <property type="project" value="HPA"/>
</dbReference>
<dbReference type="GO" id="GO:0000724">
    <property type="term" value="P:double-strand break repair via homologous recombination"/>
    <property type="evidence" value="ECO:0000315"/>
    <property type="project" value="UniProtKB"/>
</dbReference>
<dbReference type="GO" id="GO:0016197">
    <property type="term" value="P:endosomal transport"/>
    <property type="evidence" value="ECO:0000315"/>
    <property type="project" value="UniProtKB"/>
</dbReference>
<dbReference type="GO" id="GO:0015031">
    <property type="term" value="P:protein transport"/>
    <property type="evidence" value="ECO:0007669"/>
    <property type="project" value="UniProtKB-KW"/>
</dbReference>
<dbReference type="GO" id="GO:0016192">
    <property type="term" value="P:vesicle-mediated transport"/>
    <property type="evidence" value="ECO:0000303"/>
    <property type="project" value="ComplexPortal"/>
</dbReference>
<dbReference type="InterPro" id="IPR029392">
    <property type="entry name" value="AP-5_subunit_s1"/>
</dbReference>
<dbReference type="PANTHER" id="PTHR16120">
    <property type="entry name" value="AP-5 COMPLEX SUBUNIT SIGMA-1"/>
    <property type="match status" value="1"/>
</dbReference>
<dbReference type="PANTHER" id="PTHR16120:SF0">
    <property type="entry name" value="AP-5 COMPLEX SUBUNIT SIGMA-1"/>
    <property type="match status" value="1"/>
</dbReference>
<dbReference type="Pfam" id="PF15001">
    <property type="entry name" value="AP-5_subunit_s1"/>
    <property type="match status" value="1"/>
</dbReference>
<accession>Q9NUS5</accession>
<accession>B3KSD0</accession>
<accession>D3DVY7</accession>
<sequence length="200" mass="22522">MVHAFLIHTLRAPNTEDTGLCRVLYSCVFGAEKSPDDPRPHGAERDRLLRKEQILAVARQVESMCRLQQQASGRPPMDLQPQSSDEQVPLHEAPRGAFRLAAENPFQEPRTVVWLGVLSLGFALVLDAHENLLLAEGTLRLLTRLLLDHLRLLAPSTSLLLRADRIEGILTRFLPHGQLLFLNDQFVQGLEKEFSAAWPR</sequence>
<evidence type="ECO:0000269" key="1">
    <source>
    </source>
</evidence>
<evidence type="ECO:0000269" key="2">
    <source>
    </source>
</evidence>
<evidence type="ECO:0000305" key="3">
    <source>
    </source>
</evidence>
<comment type="function">
    <text evidence="1 2">As part of AP-5, a probable fifth adaptor protein complex it may be involved in endosomal transport. According to PubMed:20613862, it is required for efficient homologous recombination DNA double-strand break repair.</text>
</comment>
<comment type="subunit">
    <text evidence="1 2">Probably part of the adaptor protein complex 5 (AP-5) a tetramer composed of AP5B1, AP5M1, AP5S1 and AP5Z1. Interacts with ZFYVE26 and SPG11.</text>
</comment>
<comment type="subcellular location">
    <subcellularLocation>
        <location evidence="2">Cytoplasm</location>
        <location evidence="2">Cytosol</location>
    </subcellularLocation>
    <subcellularLocation>
        <location evidence="3">Late endosome membrane</location>
        <topology evidence="3">Peripheral membrane protein</topology>
        <orientation evidence="3">Cytoplasmic side</orientation>
    </subcellularLocation>
    <subcellularLocation>
        <location evidence="3">Lysosome membrane</location>
        <topology evidence="3">Peripheral membrane protein</topology>
        <orientation evidence="3">Cytoplasmic side</orientation>
    </subcellularLocation>
</comment>
<organism>
    <name type="scientific">Homo sapiens</name>
    <name type="common">Human</name>
    <dbReference type="NCBI Taxonomy" id="9606"/>
    <lineage>
        <taxon>Eukaryota</taxon>
        <taxon>Metazoa</taxon>
        <taxon>Chordata</taxon>
        <taxon>Craniata</taxon>
        <taxon>Vertebrata</taxon>
        <taxon>Euteleostomi</taxon>
        <taxon>Mammalia</taxon>
        <taxon>Eutheria</taxon>
        <taxon>Euarchontoglires</taxon>
        <taxon>Primates</taxon>
        <taxon>Haplorrhini</taxon>
        <taxon>Catarrhini</taxon>
        <taxon>Hominidae</taxon>
        <taxon>Homo</taxon>
    </lineage>
</organism>
<reference key="1">
    <citation type="journal article" date="2004" name="Nat. Genet.">
        <title>Complete sequencing and characterization of 21,243 full-length human cDNAs.</title>
        <authorList>
            <person name="Ota T."/>
            <person name="Suzuki Y."/>
            <person name="Nishikawa T."/>
            <person name="Otsuki T."/>
            <person name="Sugiyama T."/>
            <person name="Irie R."/>
            <person name="Wakamatsu A."/>
            <person name="Hayashi K."/>
            <person name="Sato H."/>
            <person name="Nagai K."/>
            <person name="Kimura K."/>
            <person name="Makita H."/>
            <person name="Sekine M."/>
            <person name="Obayashi M."/>
            <person name="Nishi T."/>
            <person name="Shibahara T."/>
            <person name="Tanaka T."/>
            <person name="Ishii S."/>
            <person name="Yamamoto J."/>
            <person name="Saito K."/>
            <person name="Kawai Y."/>
            <person name="Isono Y."/>
            <person name="Nakamura Y."/>
            <person name="Nagahari K."/>
            <person name="Murakami K."/>
            <person name="Yasuda T."/>
            <person name="Iwayanagi T."/>
            <person name="Wagatsuma M."/>
            <person name="Shiratori A."/>
            <person name="Sudo H."/>
            <person name="Hosoiri T."/>
            <person name="Kaku Y."/>
            <person name="Kodaira H."/>
            <person name="Kondo H."/>
            <person name="Sugawara M."/>
            <person name="Takahashi M."/>
            <person name="Kanda K."/>
            <person name="Yokoi T."/>
            <person name="Furuya T."/>
            <person name="Kikkawa E."/>
            <person name="Omura Y."/>
            <person name="Abe K."/>
            <person name="Kamihara K."/>
            <person name="Katsuta N."/>
            <person name="Sato K."/>
            <person name="Tanikawa M."/>
            <person name="Yamazaki M."/>
            <person name="Ninomiya K."/>
            <person name="Ishibashi T."/>
            <person name="Yamashita H."/>
            <person name="Murakawa K."/>
            <person name="Fujimori K."/>
            <person name="Tanai H."/>
            <person name="Kimata M."/>
            <person name="Watanabe M."/>
            <person name="Hiraoka S."/>
            <person name="Chiba Y."/>
            <person name="Ishida S."/>
            <person name="Ono Y."/>
            <person name="Takiguchi S."/>
            <person name="Watanabe S."/>
            <person name="Yosida M."/>
            <person name="Hotuta T."/>
            <person name="Kusano J."/>
            <person name="Kanehori K."/>
            <person name="Takahashi-Fujii A."/>
            <person name="Hara H."/>
            <person name="Tanase T.-O."/>
            <person name="Nomura Y."/>
            <person name="Togiya S."/>
            <person name="Komai F."/>
            <person name="Hara R."/>
            <person name="Takeuchi K."/>
            <person name="Arita M."/>
            <person name="Imose N."/>
            <person name="Musashino K."/>
            <person name="Yuuki H."/>
            <person name="Oshima A."/>
            <person name="Sasaki N."/>
            <person name="Aotsuka S."/>
            <person name="Yoshikawa Y."/>
            <person name="Matsunawa H."/>
            <person name="Ichihara T."/>
            <person name="Shiohata N."/>
            <person name="Sano S."/>
            <person name="Moriya S."/>
            <person name="Momiyama H."/>
            <person name="Satoh N."/>
            <person name="Takami S."/>
            <person name="Terashima Y."/>
            <person name="Suzuki O."/>
            <person name="Nakagawa S."/>
            <person name="Senoh A."/>
            <person name="Mizoguchi H."/>
            <person name="Goto Y."/>
            <person name="Shimizu F."/>
            <person name="Wakebe H."/>
            <person name="Hishigaki H."/>
            <person name="Watanabe T."/>
            <person name="Sugiyama A."/>
            <person name="Takemoto M."/>
            <person name="Kawakami B."/>
            <person name="Yamazaki M."/>
            <person name="Watanabe K."/>
            <person name="Kumagai A."/>
            <person name="Itakura S."/>
            <person name="Fukuzumi Y."/>
            <person name="Fujimori Y."/>
            <person name="Komiyama M."/>
            <person name="Tashiro H."/>
            <person name="Tanigami A."/>
            <person name="Fujiwara T."/>
            <person name="Ono T."/>
            <person name="Yamada K."/>
            <person name="Fujii Y."/>
            <person name="Ozaki K."/>
            <person name="Hirao M."/>
            <person name="Ohmori Y."/>
            <person name="Kawabata A."/>
            <person name="Hikiji T."/>
            <person name="Kobatake N."/>
            <person name="Inagaki H."/>
            <person name="Ikema Y."/>
            <person name="Okamoto S."/>
            <person name="Okitani R."/>
            <person name="Kawakami T."/>
            <person name="Noguchi S."/>
            <person name="Itoh T."/>
            <person name="Shigeta K."/>
            <person name="Senba T."/>
            <person name="Matsumura K."/>
            <person name="Nakajima Y."/>
            <person name="Mizuno T."/>
            <person name="Morinaga M."/>
            <person name="Sasaki M."/>
            <person name="Togashi T."/>
            <person name="Oyama M."/>
            <person name="Hata H."/>
            <person name="Watanabe M."/>
            <person name="Komatsu T."/>
            <person name="Mizushima-Sugano J."/>
            <person name="Satoh T."/>
            <person name="Shirai Y."/>
            <person name="Takahashi Y."/>
            <person name="Nakagawa K."/>
            <person name="Okumura K."/>
            <person name="Nagase T."/>
            <person name="Nomura N."/>
            <person name="Kikuchi H."/>
            <person name="Masuho Y."/>
            <person name="Yamashita R."/>
            <person name="Nakai K."/>
            <person name="Yada T."/>
            <person name="Nakamura Y."/>
            <person name="Ohara O."/>
            <person name="Isogai T."/>
            <person name="Sugano S."/>
        </authorList>
    </citation>
    <scope>NUCLEOTIDE SEQUENCE [LARGE SCALE MRNA]</scope>
    <source>
        <tissue>Placenta</tissue>
        <tissue>Testis</tissue>
    </source>
</reference>
<reference key="2">
    <citation type="journal article" date="2001" name="Nature">
        <title>The DNA sequence and comparative analysis of human chromosome 20.</title>
        <authorList>
            <person name="Deloukas P."/>
            <person name="Matthews L.H."/>
            <person name="Ashurst J.L."/>
            <person name="Burton J."/>
            <person name="Gilbert J.G.R."/>
            <person name="Jones M."/>
            <person name="Stavrides G."/>
            <person name="Almeida J.P."/>
            <person name="Babbage A.K."/>
            <person name="Bagguley C.L."/>
            <person name="Bailey J."/>
            <person name="Barlow K.F."/>
            <person name="Bates K.N."/>
            <person name="Beard L.M."/>
            <person name="Beare D.M."/>
            <person name="Beasley O.P."/>
            <person name="Bird C.P."/>
            <person name="Blakey S.E."/>
            <person name="Bridgeman A.M."/>
            <person name="Brown A.J."/>
            <person name="Buck D."/>
            <person name="Burrill W.D."/>
            <person name="Butler A.P."/>
            <person name="Carder C."/>
            <person name="Carter N.P."/>
            <person name="Chapman J.C."/>
            <person name="Clamp M."/>
            <person name="Clark G."/>
            <person name="Clark L.N."/>
            <person name="Clark S.Y."/>
            <person name="Clee C.M."/>
            <person name="Clegg S."/>
            <person name="Cobley V.E."/>
            <person name="Collier R.E."/>
            <person name="Connor R.E."/>
            <person name="Corby N.R."/>
            <person name="Coulson A."/>
            <person name="Coville G.J."/>
            <person name="Deadman R."/>
            <person name="Dhami P.D."/>
            <person name="Dunn M."/>
            <person name="Ellington A.G."/>
            <person name="Frankland J.A."/>
            <person name="Fraser A."/>
            <person name="French L."/>
            <person name="Garner P."/>
            <person name="Grafham D.V."/>
            <person name="Griffiths C."/>
            <person name="Griffiths M.N.D."/>
            <person name="Gwilliam R."/>
            <person name="Hall R.E."/>
            <person name="Hammond S."/>
            <person name="Harley J.L."/>
            <person name="Heath P.D."/>
            <person name="Ho S."/>
            <person name="Holden J.L."/>
            <person name="Howden P.J."/>
            <person name="Huckle E."/>
            <person name="Hunt A.R."/>
            <person name="Hunt S.E."/>
            <person name="Jekosch K."/>
            <person name="Johnson C.M."/>
            <person name="Johnson D."/>
            <person name="Kay M.P."/>
            <person name="Kimberley A.M."/>
            <person name="King A."/>
            <person name="Knights A."/>
            <person name="Laird G.K."/>
            <person name="Lawlor S."/>
            <person name="Lehvaeslaiho M.H."/>
            <person name="Leversha M.A."/>
            <person name="Lloyd C."/>
            <person name="Lloyd D.M."/>
            <person name="Lovell J.D."/>
            <person name="Marsh V.L."/>
            <person name="Martin S.L."/>
            <person name="McConnachie L.J."/>
            <person name="McLay K."/>
            <person name="McMurray A.A."/>
            <person name="Milne S.A."/>
            <person name="Mistry D."/>
            <person name="Moore M.J.F."/>
            <person name="Mullikin J.C."/>
            <person name="Nickerson T."/>
            <person name="Oliver K."/>
            <person name="Parker A."/>
            <person name="Patel R."/>
            <person name="Pearce T.A.V."/>
            <person name="Peck A.I."/>
            <person name="Phillimore B.J.C.T."/>
            <person name="Prathalingam S.R."/>
            <person name="Plumb R.W."/>
            <person name="Ramsay H."/>
            <person name="Rice C.M."/>
            <person name="Ross M.T."/>
            <person name="Scott C.E."/>
            <person name="Sehra H.K."/>
            <person name="Shownkeen R."/>
            <person name="Sims S."/>
            <person name="Skuce C.D."/>
            <person name="Smith M.L."/>
            <person name="Soderlund C."/>
            <person name="Steward C.A."/>
            <person name="Sulston J.E."/>
            <person name="Swann R.M."/>
            <person name="Sycamore N."/>
            <person name="Taylor R."/>
            <person name="Tee L."/>
            <person name="Thomas D.W."/>
            <person name="Thorpe A."/>
            <person name="Tracey A."/>
            <person name="Tromans A.C."/>
            <person name="Vaudin M."/>
            <person name="Wall M."/>
            <person name="Wallis J.M."/>
            <person name="Whitehead S.L."/>
            <person name="Whittaker P."/>
            <person name="Willey D.L."/>
            <person name="Williams L."/>
            <person name="Williams S.A."/>
            <person name="Wilming L."/>
            <person name="Wray P.W."/>
            <person name="Hubbard T."/>
            <person name="Durbin R.M."/>
            <person name="Bentley D.R."/>
            <person name="Beck S."/>
            <person name="Rogers J."/>
        </authorList>
    </citation>
    <scope>NUCLEOTIDE SEQUENCE [LARGE SCALE GENOMIC DNA]</scope>
</reference>
<reference key="3">
    <citation type="submission" date="2005-09" db="EMBL/GenBank/DDBJ databases">
        <authorList>
            <person name="Mural R.J."/>
            <person name="Istrail S."/>
            <person name="Sutton G.G."/>
            <person name="Florea L."/>
            <person name="Halpern A.L."/>
            <person name="Mobarry C.M."/>
            <person name="Lippert R."/>
            <person name="Walenz B."/>
            <person name="Shatkay H."/>
            <person name="Dew I."/>
            <person name="Miller J.R."/>
            <person name="Flanigan M.J."/>
            <person name="Edwards N.J."/>
            <person name="Bolanos R."/>
            <person name="Fasulo D."/>
            <person name="Halldorsson B.V."/>
            <person name="Hannenhalli S."/>
            <person name="Turner R."/>
            <person name="Yooseph S."/>
            <person name="Lu F."/>
            <person name="Nusskern D.R."/>
            <person name="Shue B.C."/>
            <person name="Zheng X.H."/>
            <person name="Zhong F."/>
            <person name="Delcher A.L."/>
            <person name="Huson D.H."/>
            <person name="Kravitz S.A."/>
            <person name="Mouchard L."/>
            <person name="Reinert K."/>
            <person name="Remington K.A."/>
            <person name="Clark A.G."/>
            <person name="Waterman M.S."/>
            <person name="Eichler E.E."/>
            <person name="Adams M.D."/>
            <person name="Hunkapiller M.W."/>
            <person name="Myers E.W."/>
            <person name="Venter J.C."/>
        </authorList>
    </citation>
    <scope>NUCLEOTIDE SEQUENCE [LARGE SCALE GENOMIC DNA]</scope>
</reference>
<reference key="4">
    <citation type="journal article" date="2004" name="Genome Res.">
        <title>The status, quality, and expansion of the NIH full-length cDNA project: the Mammalian Gene Collection (MGC).</title>
        <authorList>
            <consortium name="The MGC Project Team"/>
        </authorList>
    </citation>
    <scope>NUCLEOTIDE SEQUENCE [LARGE SCALE MRNA]</scope>
    <source>
        <tissue>Lymph</tissue>
    </source>
</reference>
<reference key="5">
    <citation type="journal article" date="2010" name="PLoS Biol.">
        <title>A genome-scale DNA repair RNAi screen identifies SPG48 as a novel gene associated with hereditary spastic paraplegia.</title>
        <authorList>
            <person name="Slabicki M."/>
            <person name="Theis M."/>
            <person name="Krastev D.B."/>
            <person name="Samsonov S."/>
            <person name="Mundwiller E."/>
            <person name="Junqueira M."/>
            <person name="Paszkowski-Rogacz M."/>
            <person name="Teyra J."/>
            <person name="Heninger A.K."/>
            <person name="Poser I."/>
            <person name="Prieur F."/>
            <person name="Truchetto J."/>
            <person name="Confavreux C."/>
            <person name="Marelli C."/>
            <person name="Durr A."/>
            <person name="Camdessanche J.P."/>
            <person name="Brice A."/>
            <person name="Shevchenko A."/>
            <person name="Pisabarro M.T."/>
            <person name="Stevanin G."/>
            <person name="Buchholz F."/>
        </authorList>
    </citation>
    <scope>FUNCTION</scope>
    <scope>INTERACTION WITH AP5Z1; AP5B1; ZFYVE26 AND SPG11</scope>
</reference>
<reference key="6">
    <citation type="journal article" date="2011" name="PLoS Biol.">
        <title>The fifth adaptor protein complex.</title>
        <authorList>
            <person name="Hirst J."/>
            <person name="Barlow L.D."/>
            <person name="Francisco G.C."/>
            <person name="Sahlender D.A."/>
            <person name="Seaman M.N."/>
            <person name="Dacks J.B."/>
            <person name="Robinson M.S."/>
        </authorList>
    </citation>
    <scope>FUNCTION IN ENDOSOME TRANSPORT</scope>
    <scope>IDENTIFICATION AS PART OF AP-5</scope>
    <scope>SUBCELLULAR LOCATION</scope>
    <scope>INTERACTION WITH AP5B1 AND AP5M1</scope>
</reference>
<feature type="chain" id="PRO_0000079423" description="AP-5 complex subunit sigma-1">
    <location>
        <begin position="1"/>
        <end position="200"/>
    </location>
</feature>
<protein>
    <recommendedName>
        <fullName>AP-5 complex subunit sigma-1</fullName>
    </recommendedName>
    <alternativeName>
        <fullName>Adaptor-related protein complex 5 sigma subunit</fullName>
        <shortName>Sigma5</shortName>
    </alternativeName>
</protein>